<name>TPX_LEPIN</name>
<keyword id="KW-0049">Antioxidant</keyword>
<keyword id="KW-1015">Disulfide bond</keyword>
<keyword id="KW-0560">Oxidoreductase</keyword>
<keyword id="KW-0575">Peroxidase</keyword>
<keyword id="KW-0676">Redox-active center</keyword>
<keyword id="KW-1185">Reference proteome</keyword>
<reference key="1">
    <citation type="journal article" date="2003" name="Nature">
        <title>Unique physiological and pathogenic features of Leptospira interrogans revealed by whole-genome sequencing.</title>
        <authorList>
            <person name="Ren S.-X."/>
            <person name="Fu G."/>
            <person name="Jiang X.-G."/>
            <person name="Zeng R."/>
            <person name="Miao Y.-G."/>
            <person name="Xu H."/>
            <person name="Zhang Y.-X."/>
            <person name="Xiong H."/>
            <person name="Lu G."/>
            <person name="Lu L.-F."/>
            <person name="Jiang H.-Q."/>
            <person name="Jia J."/>
            <person name="Tu Y.-F."/>
            <person name="Jiang J.-X."/>
            <person name="Gu W.-Y."/>
            <person name="Zhang Y.-Q."/>
            <person name="Cai Z."/>
            <person name="Sheng H.-H."/>
            <person name="Yin H.-F."/>
            <person name="Zhang Y."/>
            <person name="Zhu G.-F."/>
            <person name="Wan M."/>
            <person name="Huang H.-L."/>
            <person name="Qian Z."/>
            <person name="Wang S.-Y."/>
            <person name="Ma W."/>
            <person name="Yao Z.-J."/>
            <person name="Shen Y."/>
            <person name="Qiang B.-Q."/>
            <person name="Xia Q.-C."/>
            <person name="Guo X.-K."/>
            <person name="Danchin A."/>
            <person name="Saint Girons I."/>
            <person name="Somerville R.L."/>
            <person name="Wen Y.-M."/>
            <person name="Shi M.-H."/>
            <person name="Chen Z."/>
            <person name="Xu J.-G."/>
            <person name="Zhao G.-P."/>
        </authorList>
    </citation>
    <scope>NUCLEOTIDE SEQUENCE [LARGE SCALE GENOMIC DNA]</scope>
    <source>
        <strain>56601</strain>
    </source>
</reference>
<comment type="function">
    <text evidence="1">Thiol-specific peroxidase that catalyzes the reduction of hydrogen peroxide and organic hydroperoxides to water and alcohols, respectively. Plays a role in cell protection against oxidative stress by detoxifying peroxides.</text>
</comment>
<comment type="catalytic activity">
    <reaction evidence="1">
        <text>a hydroperoxide + [thioredoxin]-dithiol = an alcohol + [thioredoxin]-disulfide + H2O</text>
        <dbReference type="Rhea" id="RHEA:62620"/>
        <dbReference type="Rhea" id="RHEA-COMP:10698"/>
        <dbReference type="Rhea" id="RHEA-COMP:10700"/>
        <dbReference type="ChEBI" id="CHEBI:15377"/>
        <dbReference type="ChEBI" id="CHEBI:29950"/>
        <dbReference type="ChEBI" id="CHEBI:30879"/>
        <dbReference type="ChEBI" id="CHEBI:35924"/>
        <dbReference type="ChEBI" id="CHEBI:50058"/>
        <dbReference type="EC" id="1.11.1.24"/>
    </reaction>
</comment>
<comment type="subunit">
    <text evidence="1">Homodimer.</text>
</comment>
<comment type="miscellaneous">
    <text evidence="1">The active site is a conserved redox-active cysteine residue, the peroxidatic cysteine (C(P)), which makes the nucleophilic attack on the peroxide substrate. The peroxide oxidizes the C(P)-SH to cysteine sulfenic acid (C(P)-SOH), which then reacts with another cysteine residue, the resolving cysteine (C(R)), to form a disulfide bridge. The disulfide is subsequently reduced by an appropriate electron donor to complete the catalytic cycle. In this atypical 2-Cys peroxiredoxin, C(R) is present in the same subunit to form an intramolecular disulfide. The disulfide is subsequently reduced by thioredoxin.</text>
</comment>
<comment type="similarity">
    <text evidence="1">Belongs to the peroxiredoxin family. Tpx subfamily.</text>
</comment>
<accession>Q8F7T2</accession>
<evidence type="ECO:0000255" key="1">
    <source>
        <dbReference type="HAMAP-Rule" id="MF_00269"/>
    </source>
</evidence>
<gene>
    <name evidence="1" type="primary">tpx</name>
    <name type="ordered locus">LA_0862</name>
</gene>
<sequence length="171" mass="18061">MTKVTLKGNPVQLEGKIPSPGDKAPDFKAIKQDLSEFSLKDYAGKVKILVAVPSLDTSVCALETKAFNEKAAGISGVTTLVISGDLPFAMGRFCSTEGINSPNLVTGSQYRDFSFSKAYGTHIADGPLKGLSARAVFVLDKSDTVRYVEIVPEITTEPNYTAAIAAANAAL</sequence>
<proteinExistence type="inferred from homology"/>
<dbReference type="EC" id="1.11.1.24" evidence="1"/>
<dbReference type="EMBL" id="AE010300">
    <property type="protein sequence ID" value="AAN48061.1"/>
    <property type="molecule type" value="Genomic_DNA"/>
</dbReference>
<dbReference type="RefSeq" id="NP_711043.1">
    <property type="nucleotide sequence ID" value="NC_004342.2"/>
</dbReference>
<dbReference type="RefSeq" id="WP_000170133.1">
    <property type="nucleotide sequence ID" value="NC_004342.2"/>
</dbReference>
<dbReference type="SMR" id="Q8F7T2"/>
<dbReference type="FunCoup" id="Q8F7T2">
    <property type="interactions" value="149"/>
</dbReference>
<dbReference type="STRING" id="189518.LA_0862"/>
<dbReference type="PaxDb" id="189518-LA_0862"/>
<dbReference type="EnsemblBacteria" id="AAN48061">
    <property type="protein sequence ID" value="AAN48061"/>
    <property type="gene ID" value="LA_0862"/>
</dbReference>
<dbReference type="GeneID" id="61142643"/>
<dbReference type="KEGG" id="lil:LA_0862"/>
<dbReference type="PATRIC" id="fig|189518.3.peg.866"/>
<dbReference type="HOGENOM" id="CLU_042529_12_2_12"/>
<dbReference type="InParanoid" id="Q8F7T2"/>
<dbReference type="OrthoDB" id="9781543at2"/>
<dbReference type="Proteomes" id="UP000001408">
    <property type="component" value="Chromosome I"/>
</dbReference>
<dbReference type="GO" id="GO:0008379">
    <property type="term" value="F:thioredoxin peroxidase activity"/>
    <property type="evidence" value="ECO:0007669"/>
    <property type="project" value="UniProtKB-UniRule"/>
</dbReference>
<dbReference type="CDD" id="cd03014">
    <property type="entry name" value="PRX_Atyp2cys"/>
    <property type="match status" value="1"/>
</dbReference>
<dbReference type="Gene3D" id="3.40.30.10">
    <property type="entry name" value="Glutaredoxin"/>
    <property type="match status" value="1"/>
</dbReference>
<dbReference type="HAMAP" id="MF_00269">
    <property type="entry name" value="Tpx"/>
    <property type="match status" value="1"/>
</dbReference>
<dbReference type="InterPro" id="IPR013740">
    <property type="entry name" value="Redoxin"/>
</dbReference>
<dbReference type="InterPro" id="IPR036249">
    <property type="entry name" value="Thioredoxin-like_sf"/>
</dbReference>
<dbReference type="InterPro" id="IPR013766">
    <property type="entry name" value="Thioredoxin_domain"/>
</dbReference>
<dbReference type="InterPro" id="IPR002065">
    <property type="entry name" value="TPX"/>
</dbReference>
<dbReference type="InterPro" id="IPR018219">
    <property type="entry name" value="Tpx_CS"/>
</dbReference>
<dbReference type="InterPro" id="IPR050455">
    <property type="entry name" value="Tpx_Peroxidase_subfamily"/>
</dbReference>
<dbReference type="NCBIfam" id="NF001808">
    <property type="entry name" value="PRK00522.1"/>
    <property type="match status" value="1"/>
</dbReference>
<dbReference type="PANTHER" id="PTHR43110">
    <property type="entry name" value="THIOL PEROXIDASE"/>
    <property type="match status" value="1"/>
</dbReference>
<dbReference type="PANTHER" id="PTHR43110:SF1">
    <property type="entry name" value="THIOL PEROXIDASE"/>
    <property type="match status" value="1"/>
</dbReference>
<dbReference type="Pfam" id="PF08534">
    <property type="entry name" value="Redoxin"/>
    <property type="match status" value="1"/>
</dbReference>
<dbReference type="SUPFAM" id="SSF52833">
    <property type="entry name" value="Thioredoxin-like"/>
    <property type="match status" value="1"/>
</dbReference>
<dbReference type="PROSITE" id="PS51352">
    <property type="entry name" value="THIOREDOXIN_2"/>
    <property type="match status" value="1"/>
</dbReference>
<dbReference type="PROSITE" id="PS01265">
    <property type="entry name" value="TPX"/>
    <property type="match status" value="1"/>
</dbReference>
<organism>
    <name type="scientific">Leptospira interrogans serogroup Icterohaemorrhagiae serovar Lai (strain 56601)</name>
    <dbReference type="NCBI Taxonomy" id="189518"/>
    <lineage>
        <taxon>Bacteria</taxon>
        <taxon>Pseudomonadati</taxon>
        <taxon>Spirochaetota</taxon>
        <taxon>Spirochaetia</taxon>
        <taxon>Leptospirales</taxon>
        <taxon>Leptospiraceae</taxon>
        <taxon>Leptospira</taxon>
    </lineage>
</organism>
<feature type="chain" id="PRO_0000187884" description="Thiol peroxidase">
    <location>
        <begin position="1"/>
        <end position="171"/>
    </location>
</feature>
<feature type="domain" description="Thioredoxin" evidence="1">
    <location>
        <begin position="18"/>
        <end position="169"/>
    </location>
</feature>
<feature type="active site" description="Cysteine sulfenic acid (-SOH) intermediate" evidence="1">
    <location>
        <position position="60"/>
    </location>
</feature>
<feature type="disulfide bond" description="Redox-active" evidence="1">
    <location>
        <begin position="60"/>
        <end position="94"/>
    </location>
</feature>
<protein>
    <recommendedName>
        <fullName evidence="1">Thiol peroxidase</fullName>
        <shortName evidence="1">Tpx</shortName>
        <ecNumber evidence="1">1.11.1.24</ecNumber>
    </recommendedName>
    <alternativeName>
        <fullName evidence="1">Peroxiredoxin tpx</fullName>
        <shortName evidence="1">Prx</shortName>
    </alternativeName>
    <alternativeName>
        <fullName evidence="1">Thioredoxin peroxidase</fullName>
    </alternativeName>
    <alternativeName>
        <fullName evidence="1">Thioredoxin-dependent peroxiredoxin</fullName>
    </alternativeName>
</protein>